<keyword id="KW-0406">Ion transport</keyword>
<keyword id="KW-0520">NAD</keyword>
<keyword id="KW-0630">Potassium</keyword>
<keyword id="KW-0633">Potassium transport</keyword>
<keyword id="KW-1185">Reference proteome</keyword>
<keyword id="KW-0677">Repeat</keyword>
<keyword id="KW-0813">Transport</keyword>
<sequence length="436" mass="47365">MRIVIAGAGEVGYHLAMSLAPNHDVIIIEKDVSRFERVSELDVVAINGNAANMKVLRDAGVERADVFLAVTGNDEVNLLSGLAAKKVGAKNVIVRVENPEYVDRPIVKEHPLGYDVLICPQLSLAQEAARLIGIPGAIEVVTFSGGKVEMIELQVMEGSKADGKAIADLYLPQNVVIASIYRNGHIEIPRGDTVLRAGDRVAIVSKTEDVEMLKGIFGPPVTRRVTIFGAGTIGSYTAKILAKGMTSVKLIESSMERCEALSGELEGVRIVCGDATDIEFLIEEEIGKSDAVLAATESDEKNLLISLLSKNLGARIAIAKVEKREYVKLFEAVGVDVALNPRSVTYNEVSKLLRTMRIETLAEIEGTAVVEVVVRNTRLVGKALKDLPLPKDAIIGAIVRGNECLIPRGDTTIEYEDRLLVFAKWDEIEKIEEIFR</sequence>
<proteinExistence type="inferred from homology"/>
<organism>
    <name type="scientific">Archaeoglobus fulgidus (strain ATCC 49558 / DSM 4304 / JCM 9628 / NBRC 100126 / VC-16)</name>
    <dbReference type="NCBI Taxonomy" id="224325"/>
    <lineage>
        <taxon>Archaea</taxon>
        <taxon>Methanobacteriati</taxon>
        <taxon>Methanobacteriota</taxon>
        <taxon>Archaeoglobi</taxon>
        <taxon>Archaeoglobales</taxon>
        <taxon>Archaeoglobaceae</taxon>
        <taxon>Archaeoglobus</taxon>
    </lineage>
</organism>
<comment type="function">
    <text evidence="1">Part of a potassium transport system.</text>
</comment>
<comment type="domain">
    <text evidence="1">The RCK N-terminal domain binds NAD and possibly other effectors. This is expected to cause a conformation change that regulates potassium transport (By similarity).</text>
</comment>
<gene>
    <name type="primary">trkA</name>
    <name type="ordered locus">AF_0838</name>
</gene>
<feature type="chain" id="PRO_0000148722" description="Trk system potassium uptake protein TrkA homolog">
    <location>
        <begin position="1"/>
        <end position="436"/>
    </location>
</feature>
<feature type="domain" description="RCK N-terminal 1" evidence="3">
    <location>
        <begin position="1"/>
        <end position="118"/>
    </location>
</feature>
<feature type="domain" description="RCK C-terminal 1" evidence="4">
    <location>
        <begin position="138"/>
        <end position="219"/>
    </location>
</feature>
<feature type="domain" description="RCK N-terminal 2" evidence="3">
    <location>
        <begin position="222"/>
        <end position="339"/>
    </location>
</feature>
<feature type="domain" description="RCK C-terminal 2" evidence="4">
    <location>
        <begin position="356"/>
        <end position="436"/>
    </location>
</feature>
<feature type="binding site" description="in other chain" evidence="1">
    <location>
        <begin position="7"/>
        <end position="11"/>
    </location>
    <ligand>
        <name>NAD(+)</name>
        <dbReference type="ChEBI" id="CHEBI:57540"/>
        <label>1</label>
        <note>ligand shared between dimeric partners</note>
    </ligand>
</feature>
<feature type="binding site" description="in other chain" evidence="1">
    <location>
        <position position="29"/>
    </location>
    <ligand>
        <name>NAD(+)</name>
        <dbReference type="ChEBI" id="CHEBI:57540"/>
        <label>1</label>
        <note>ligand shared between dimeric partners</note>
    </ligand>
</feature>
<feature type="binding site" description="in other chain" evidence="1">
    <location>
        <begin position="71"/>
        <end position="72"/>
    </location>
    <ligand>
        <name>NAD(+)</name>
        <dbReference type="ChEBI" id="CHEBI:57540"/>
        <label>1</label>
        <note>ligand shared between dimeric partners</note>
    </ligand>
</feature>
<feature type="binding site" evidence="1">
    <location>
        <position position="95"/>
    </location>
    <ligand>
        <name>NAD(+)</name>
        <dbReference type="ChEBI" id="CHEBI:57540"/>
        <label>1</label>
        <note>ligand shared between dimeric partners</note>
    </ligand>
</feature>
<feature type="binding site" evidence="2">
    <location>
        <begin position="226"/>
        <end position="253"/>
    </location>
    <ligand>
        <name>NAD(+)</name>
        <dbReference type="ChEBI" id="CHEBI:57540"/>
        <label>2</label>
    </ligand>
</feature>
<name>TRKA_ARCFU</name>
<dbReference type="EMBL" id="AE000782">
    <property type="protein sequence ID" value="AAB90401.1"/>
    <property type="molecule type" value="Genomic_DNA"/>
</dbReference>
<dbReference type="PIR" id="F69354">
    <property type="entry name" value="F69354"/>
</dbReference>
<dbReference type="RefSeq" id="WP_010878341.1">
    <property type="nucleotide sequence ID" value="NC_000917.1"/>
</dbReference>
<dbReference type="SMR" id="O29420"/>
<dbReference type="STRING" id="224325.AF_0838"/>
<dbReference type="PaxDb" id="224325-AF_0838"/>
<dbReference type="DNASU" id="1484057"/>
<dbReference type="EnsemblBacteria" id="AAB90401">
    <property type="protein sequence ID" value="AAB90401"/>
    <property type="gene ID" value="AF_0838"/>
</dbReference>
<dbReference type="GeneID" id="24794436"/>
<dbReference type="KEGG" id="afu:AF_0838"/>
<dbReference type="eggNOG" id="arCOG01959">
    <property type="taxonomic scope" value="Archaea"/>
</dbReference>
<dbReference type="HOGENOM" id="CLU_046525_0_0_2"/>
<dbReference type="OrthoDB" id="27588at2157"/>
<dbReference type="PhylomeDB" id="O29420"/>
<dbReference type="Proteomes" id="UP000002199">
    <property type="component" value="Chromosome"/>
</dbReference>
<dbReference type="GO" id="GO:0005886">
    <property type="term" value="C:plasma membrane"/>
    <property type="evidence" value="ECO:0007669"/>
    <property type="project" value="InterPro"/>
</dbReference>
<dbReference type="GO" id="GO:0015079">
    <property type="term" value="F:potassium ion transmembrane transporter activity"/>
    <property type="evidence" value="ECO:0007669"/>
    <property type="project" value="InterPro"/>
</dbReference>
<dbReference type="Gene3D" id="3.40.50.720">
    <property type="entry name" value="NAD(P)-binding Rossmann-like Domain"/>
    <property type="match status" value="2"/>
</dbReference>
<dbReference type="Gene3D" id="3.30.70.1450">
    <property type="entry name" value="Regulator of K+ conductance, C-terminal domain"/>
    <property type="match status" value="2"/>
</dbReference>
<dbReference type="InterPro" id="IPR006036">
    <property type="entry name" value="K_uptake_TrkA"/>
</dbReference>
<dbReference type="InterPro" id="IPR036291">
    <property type="entry name" value="NAD(P)-bd_dom_sf"/>
</dbReference>
<dbReference type="InterPro" id="IPR006037">
    <property type="entry name" value="RCK_C"/>
</dbReference>
<dbReference type="InterPro" id="IPR036721">
    <property type="entry name" value="RCK_C_sf"/>
</dbReference>
<dbReference type="InterPro" id="IPR003148">
    <property type="entry name" value="RCK_N"/>
</dbReference>
<dbReference type="InterPro" id="IPR050721">
    <property type="entry name" value="Trk_Ktr_HKT_K-transport"/>
</dbReference>
<dbReference type="NCBIfam" id="NF007031">
    <property type="entry name" value="PRK09496.1-2"/>
    <property type="match status" value="1"/>
</dbReference>
<dbReference type="NCBIfam" id="NF007034">
    <property type="entry name" value="PRK09496.2-1"/>
    <property type="match status" value="1"/>
</dbReference>
<dbReference type="NCBIfam" id="NF007036">
    <property type="entry name" value="PRK09496.2-3"/>
    <property type="match status" value="1"/>
</dbReference>
<dbReference type="NCBIfam" id="NF007039">
    <property type="entry name" value="PRK09496.3-2"/>
    <property type="match status" value="1"/>
</dbReference>
<dbReference type="NCBIfam" id="NF007041">
    <property type="entry name" value="PRK09496.3-4"/>
    <property type="match status" value="1"/>
</dbReference>
<dbReference type="PANTHER" id="PTHR43833">
    <property type="entry name" value="POTASSIUM CHANNEL PROTEIN 2-RELATED-RELATED"/>
    <property type="match status" value="1"/>
</dbReference>
<dbReference type="PANTHER" id="PTHR43833:SF5">
    <property type="entry name" value="TRK SYSTEM POTASSIUM UPTAKE PROTEIN TRKA"/>
    <property type="match status" value="1"/>
</dbReference>
<dbReference type="Pfam" id="PF02080">
    <property type="entry name" value="TrkA_C"/>
    <property type="match status" value="2"/>
</dbReference>
<dbReference type="Pfam" id="PF02254">
    <property type="entry name" value="TrkA_N"/>
    <property type="match status" value="2"/>
</dbReference>
<dbReference type="PRINTS" id="PR00335">
    <property type="entry name" value="KUPTAKETRKA"/>
</dbReference>
<dbReference type="SUPFAM" id="SSF51735">
    <property type="entry name" value="NAD(P)-binding Rossmann-fold domains"/>
    <property type="match status" value="2"/>
</dbReference>
<dbReference type="SUPFAM" id="SSF116726">
    <property type="entry name" value="TrkA C-terminal domain-like"/>
    <property type="match status" value="2"/>
</dbReference>
<dbReference type="PROSITE" id="PS51202">
    <property type="entry name" value="RCK_C"/>
    <property type="match status" value="2"/>
</dbReference>
<dbReference type="PROSITE" id="PS51201">
    <property type="entry name" value="RCK_N"/>
    <property type="match status" value="2"/>
</dbReference>
<reference key="1">
    <citation type="journal article" date="1997" name="Nature">
        <title>The complete genome sequence of the hyperthermophilic, sulphate-reducing archaeon Archaeoglobus fulgidus.</title>
        <authorList>
            <person name="Klenk H.-P."/>
            <person name="Clayton R.A."/>
            <person name="Tomb J.-F."/>
            <person name="White O."/>
            <person name="Nelson K.E."/>
            <person name="Ketchum K.A."/>
            <person name="Dodson R.J."/>
            <person name="Gwinn M.L."/>
            <person name="Hickey E.K."/>
            <person name="Peterson J.D."/>
            <person name="Richardson D.L."/>
            <person name="Kerlavage A.R."/>
            <person name="Graham D.E."/>
            <person name="Kyrpides N.C."/>
            <person name="Fleischmann R.D."/>
            <person name="Quackenbush J."/>
            <person name="Lee N.H."/>
            <person name="Sutton G.G."/>
            <person name="Gill S.R."/>
            <person name="Kirkness E.F."/>
            <person name="Dougherty B.A."/>
            <person name="McKenney K."/>
            <person name="Adams M.D."/>
            <person name="Loftus B.J."/>
            <person name="Peterson S.N."/>
            <person name="Reich C.I."/>
            <person name="McNeil L.K."/>
            <person name="Badger J.H."/>
            <person name="Glodek A."/>
            <person name="Zhou L."/>
            <person name="Overbeek R."/>
            <person name="Gocayne J.D."/>
            <person name="Weidman J.F."/>
            <person name="McDonald L.A."/>
            <person name="Utterback T.R."/>
            <person name="Cotton M.D."/>
            <person name="Spriggs T."/>
            <person name="Artiach P."/>
            <person name="Kaine B.P."/>
            <person name="Sykes S.M."/>
            <person name="Sadow P.W."/>
            <person name="D'Andrea K.P."/>
            <person name="Bowman C."/>
            <person name="Fujii C."/>
            <person name="Garland S.A."/>
            <person name="Mason T.M."/>
            <person name="Olsen G.J."/>
            <person name="Fraser C.M."/>
            <person name="Smith H.O."/>
            <person name="Woese C.R."/>
            <person name="Venter J.C."/>
        </authorList>
    </citation>
    <scope>NUCLEOTIDE SEQUENCE [LARGE SCALE GENOMIC DNA]</scope>
    <source>
        <strain>ATCC 49558 / DSM 4304 / JCM 9628 / NBRC 100126 / VC-16</strain>
    </source>
</reference>
<accession>O29420</accession>
<evidence type="ECO:0000250" key="1"/>
<evidence type="ECO:0000255" key="2"/>
<evidence type="ECO:0000255" key="3">
    <source>
        <dbReference type="PROSITE-ProRule" id="PRU00543"/>
    </source>
</evidence>
<evidence type="ECO:0000255" key="4">
    <source>
        <dbReference type="PROSITE-ProRule" id="PRU00544"/>
    </source>
</evidence>
<protein>
    <recommendedName>
        <fullName>Trk system potassium uptake protein TrkA homolog</fullName>
        <shortName>K(+)-uptake protein TrkA homolog</shortName>
    </recommendedName>
</protein>